<evidence type="ECO:0000305" key="1"/>
<dbReference type="EMBL" id="AJ235271">
    <property type="protein sequence ID" value="CAA14697.1"/>
    <property type="molecule type" value="Genomic_DNA"/>
</dbReference>
<dbReference type="PIR" id="G71677">
    <property type="entry name" value="G71677"/>
</dbReference>
<dbReference type="RefSeq" id="NP_220620.1">
    <property type="nucleotide sequence ID" value="NC_000963.1"/>
</dbReference>
<dbReference type="RefSeq" id="WP_004598550.1">
    <property type="nucleotide sequence ID" value="NC_000963.1"/>
</dbReference>
<dbReference type="SMR" id="Q9ZDU0"/>
<dbReference type="STRING" id="272947.gene:17555315"/>
<dbReference type="EnsemblBacteria" id="CAA14697">
    <property type="protein sequence ID" value="CAA14697"/>
    <property type="gene ID" value="CAA14697"/>
</dbReference>
<dbReference type="GeneID" id="57569362"/>
<dbReference type="KEGG" id="rpr:RP234"/>
<dbReference type="PATRIC" id="fig|272947.5.peg.242"/>
<dbReference type="eggNOG" id="COG0103">
    <property type="taxonomic scope" value="Bacteria"/>
</dbReference>
<dbReference type="HOGENOM" id="CLU_046483_2_0_5"/>
<dbReference type="OrthoDB" id="9803965at2"/>
<dbReference type="Proteomes" id="UP000002480">
    <property type="component" value="Chromosome"/>
</dbReference>
<dbReference type="GO" id="GO:0022627">
    <property type="term" value="C:cytosolic small ribosomal subunit"/>
    <property type="evidence" value="ECO:0007669"/>
    <property type="project" value="TreeGrafter"/>
</dbReference>
<dbReference type="GO" id="GO:0003723">
    <property type="term" value="F:RNA binding"/>
    <property type="evidence" value="ECO:0007669"/>
    <property type="project" value="TreeGrafter"/>
</dbReference>
<dbReference type="GO" id="GO:0003735">
    <property type="term" value="F:structural constituent of ribosome"/>
    <property type="evidence" value="ECO:0007669"/>
    <property type="project" value="InterPro"/>
</dbReference>
<dbReference type="GO" id="GO:0006412">
    <property type="term" value="P:translation"/>
    <property type="evidence" value="ECO:0007669"/>
    <property type="project" value="UniProtKB-UniRule"/>
</dbReference>
<dbReference type="FunFam" id="3.30.230.10:FF:000001">
    <property type="entry name" value="30S ribosomal protein S9"/>
    <property type="match status" value="1"/>
</dbReference>
<dbReference type="Gene3D" id="3.30.230.10">
    <property type="match status" value="1"/>
</dbReference>
<dbReference type="HAMAP" id="MF_00532_B">
    <property type="entry name" value="Ribosomal_uS9_B"/>
    <property type="match status" value="1"/>
</dbReference>
<dbReference type="InterPro" id="IPR020568">
    <property type="entry name" value="Ribosomal_Su5_D2-typ_SF"/>
</dbReference>
<dbReference type="InterPro" id="IPR000754">
    <property type="entry name" value="Ribosomal_uS9"/>
</dbReference>
<dbReference type="InterPro" id="IPR023035">
    <property type="entry name" value="Ribosomal_uS9_bac/plastid"/>
</dbReference>
<dbReference type="InterPro" id="IPR020574">
    <property type="entry name" value="Ribosomal_uS9_CS"/>
</dbReference>
<dbReference type="InterPro" id="IPR014721">
    <property type="entry name" value="Ribsml_uS5_D2-typ_fold_subgr"/>
</dbReference>
<dbReference type="NCBIfam" id="NF001099">
    <property type="entry name" value="PRK00132.1"/>
    <property type="match status" value="1"/>
</dbReference>
<dbReference type="PANTHER" id="PTHR21569">
    <property type="entry name" value="RIBOSOMAL PROTEIN S9"/>
    <property type="match status" value="1"/>
</dbReference>
<dbReference type="PANTHER" id="PTHR21569:SF1">
    <property type="entry name" value="SMALL RIBOSOMAL SUBUNIT PROTEIN US9M"/>
    <property type="match status" value="1"/>
</dbReference>
<dbReference type="Pfam" id="PF00380">
    <property type="entry name" value="Ribosomal_S9"/>
    <property type="match status" value="1"/>
</dbReference>
<dbReference type="SUPFAM" id="SSF54211">
    <property type="entry name" value="Ribosomal protein S5 domain 2-like"/>
    <property type="match status" value="1"/>
</dbReference>
<dbReference type="PROSITE" id="PS00360">
    <property type="entry name" value="RIBOSOMAL_S9"/>
    <property type="match status" value="1"/>
</dbReference>
<organism>
    <name type="scientific">Rickettsia prowazekii (strain Madrid E)</name>
    <dbReference type="NCBI Taxonomy" id="272947"/>
    <lineage>
        <taxon>Bacteria</taxon>
        <taxon>Pseudomonadati</taxon>
        <taxon>Pseudomonadota</taxon>
        <taxon>Alphaproteobacteria</taxon>
        <taxon>Rickettsiales</taxon>
        <taxon>Rickettsiaceae</taxon>
        <taxon>Rickettsieae</taxon>
        <taxon>Rickettsia</taxon>
        <taxon>typhus group</taxon>
    </lineage>
</organism>
<accession>Q9ZDU0</accession>
<sequence>MTELKIKTEKVVKQLTKESLKSVLKIPKEKIDSVSKFYATGKRKNAIARVWLKVGKGKIVVNNKILNQYFPSETYVKTILQPFILTKTIDQYDVICTVKGGGISGQKGAILHGISKALDKSAPCFHAILRKGGLLTRDSRVVERKKYGQRKARKKTQFSKR</sequence>
<protein>
    <recommendedName>
        <fullName evidence="1">Small ribosomal subunit protein uS9</fullName>
    </recommendedName>
    <alternativeName>
        <fullName>30S ribosomal protein S9</fullName>
    </alternativeName>
</protein>
<gene>
    <name type="primary">rpsI</name>
    <name type="ordered locus">RP234</name>
</gene>
<proteinExistence type="inferred from homology"/>
<feature type="chain" id="PRO_0000111399" description="Small ribosomal subunit protein uS9">
    <location>
        <begin position="1"/>
        <end position="161"/>
    </location>
</feature>
<comment type="similarity">
    <text evidence="1">Belongs to the universal ribosomal protein uS9 family.</text>
</comment>
<name>RS9_RICPR</name>
<reference key="1">
    <citation type="journal article" date="1998" name="Nature">
        <title>The genome sequence of Rickettsia prowazekii and the origin of mitochondria.</title>
        <authorList>
            <person name="Andersson S.G.E."/>
            <person name="Zomorodipour A."/>
            <person name="Andersson J.O."/>
            <person name="Sicheritz-Ponten T."/>
            <person name="Alsmark U.C.M."/>
            <person name="Podowski R.M."/>
            <person name="Naeslund A.K."/>
            <person name="Eriksson A.-S."/>
            <person name="Winkler H.H."/>
            <person name="Kurland C.G."/>
        </authorList>
    </citation>
    <scope>NUCLEOTIDE SEQUENCE [LARGE SCALE GENOMIC DNA]</scope>
    <source>
        <strain>Madrid E</strain>
    </source>
</reference>
<keyword id="KW-1185">Reference proteome</keyword>
<keyword id="KW-0687">Ribonucleoprotein</keyword>
<keyword id="KW-0689">Ribosomal protein</keyword>